<name>OTC_VIBCH</name>
<gene>
    <name evidence="2" type="primary">argF</name>
    <name type="ordered locus">VC_2508</name>
</gene>
<proteinExistence type="inferred from homology"/>
<accession>Q9KP68</accession>
<organism>
    <name type="scientific">Vibrio cholerae serotype O1 (strain ATCC 39315 / El Tor Inaba N16961)</name>
    <dbReference type="NCBI Taxonomy" id="243277"/>
    <lineage>
        <taxon>Bacteria</taxon>
        <taxon>Pseudomonadati</taxon>
        <taxon>Pseudomonadota</taxon>
        <taxon>Gammaproteobacteria</taxon>
        <taxon>Vibrionales</taxon>
        <taxon>Vibrionaceae</taxon>
        <taxon>Vibrio</taxon>
    </lineage>
</organism>
<reference key="1">
    <citation type="journal article" date="2000" name="Nature">
        <title>DNA sequence of both chromosomes of the cholera pathogen Vibrio cholerae.</title>
        <authorList>
            <person name="Heidelberg J.F."/>
            <person name="Eisen J.A."/>
            <person name="Nelson W.C."/>
            <person name="Clayton R.A."/>
            <person name="Gwinn M.L."/>
            <person name="Dodson R.J."/>
            <person name="Haft D.H."/>
            <person name="Hickey E.K."/>
            <person name="Peterson J.D."/>
            <person name="Umayam L.A."/>
            <person name="Gill S.R."/>
            <person name="Nelson K.E."/>
            <person name="Read T.D."/>
            <person name="Tettelin H."/>
            <person name="Richardson D.L."/>
            <person name="Ermolaeva M.D."/>
            <person name="Vamathevan J.J."/>
            <person name="Bass S."/>
            <person name="Qin H."/>
            <person name="Dragoi I."/>
            <person name="Sellers P."/>
            <person name="McDonald L.A."/>
            <person name="Utterback T.R."/>
            <person name="Fleischmann R.D."/>
            <person name="Nierman W.C."/>
            <person name="White O."/>
            <person name="Salzberg S.L."/>
            <person name="Smith H.O."/>
            <person name="Colwell R.R."/>
            <person name="Mekalanos J.J."/>
            <person name="Venter J.C."/>
            <person name="Fraser C.M."/>
        </authorList>
    </citation>
    <scope>NUCLEOTIDE SEQUENCE [LARGE SCALE GENOMIC DNA]</scope>
    <source>
        <strain>ATCC 39315 / El Tor Inaba N16961</strain>
    </source>
</reference>
<evidence type="ECO:0000250" key="1"/>
<evidence type="ECO:0000255" key="2">
    <source>
        <dbReference type="HAMAP-Rule" id="MF_01109"/>
    </source>
</evidence>
<comment type="function">
    <text evidence="1">Reversibly catalyzes the transfer of the carbamoyl group from carbamoyl phosphate (CP) to the N(epsilon) atom of ornithine (ORN) to produce L-citrulline.</text>
</comment>
<comment type="catalytic activity">
    <reaction evidence="2">
        <text>carbamoyl phosphate + L-ornithine = L-citrulline + phosphate + H(+)</text>
        <dbReference type="Rhea" id="RHEA:19513"/>
        <dbReference type="ChEBI" id="CHEBI:15378"/>
        <dbReference type="ChEBI" id="CHEBI:43474"/>
        <dbReference type="ChEBI" id="CHEBI:46911"/>
        <dbReference type="ChEBI" id="CHEBI:57743"/>
        <dbReference type="ChEBI" id="CHEBI:58228"/>
        <dbReference type="EC" id="2.1.3.3"/>
    </reaction>
</comment>
<comment type="pathway">
    <text evidence="2">Amino-acid biosynthesis; L-arginine biosynthesis; L-arginine from L-ornithine and carbamoyl phosphate: step 1/3.</text>
</comment>
<comment type="subcellular location">
    <subcellularLocation>
        <location evidence="2">Cytoplasm</location>
    </subcellularLocation>
</comment>
<comment type="similarity">
    <text evidence="2">Belongs to the aspartate/ornithine carbamoyltransferase superfamily. OTCase family.</text>
</comment>
<sequence length="334" mass="37322">MAFNLRNRNFLKLLDFTPKEIHFLLDLSAELKRAKYAGTEQKTLQGKNIALIFEKSSTRTRCAFEVAAFDQGAQVSYIGPSGSQIGHKESMKDTARVLGRMYDGIQYRGFGQEIVEVLGQYAGVPVWNGLTDEFHPTQILADLLTMQEYGRSKQLHEMKFAYLGDARNNMGNSLMVGAAKMGMDIRLVAPKAYWPNDALVATCQEIAKQTGAKITLTEEVQEGVKGCDFLYTDVWVSMGEAADAWDERVALMKPYQVNMDVIKATGNPQVKFMHCLPAFHDDQTKVGQEIAAKYGMQGLEVTEEVFESEYSIVFDEAENRLHTIKAVMVATLGQ</sequence>
<keyword id="KW-0028">Amino-acid biosynthesis</keyword>
<keyword id="KW-0055">Arginine biosynthesis</keyword>
<keyword id="KW-0963">Cytoplasm</keyword>
<keyword id="KW-1185">Reference proteome</keyword>
<keyword id="KW-0808">Transferase</keyword>
<dbReference type="EC" id="2.1.3.3" evidence="2"/>
<dbReference type="EMBL" id="AE003852">
    <property type="protein sequence ID" value="AAF95650.1"/>
    <property type="molecule type" value="Genomic_DNA"/>
</dbReference>
<dbReference type="PIR" id="F82066">
    <property type="entry name" value="F82066"/>
</dbReference>
<dbReference type="RefSeq" id="NP_232137.1">
    <property type="nucleotide sequence ID" value="NC_002505.1"/>
</dbReference>
<dbReference type="RefSeq" id="WP_000885260.1">
    <property type="nucleotide sequence ID" value="NZ_LT906614.1"/>
</dbReference>
<dbReference type="SMR" id="Q9KP68"/>
<dbReference type="STRING" id="243277.VC_2508"/>
<dbReference type="DNASU" id="2615172"/>
<dbReference type="EnsemblBacteria" id="AAF95650">
    <property type="protein sequence ID" value="AAF95650"/>
    <property type="gene ID" value="VC_2508"/>
</dbReference>
<dbReference type="KEGG" id="vch:VC_2508"/>
<dbReference type="PATRIC" id="fig|243277.26.peg.2390"/>
<dbReference type="eggNOG" id="COG0078">
    <property type="taxonomic scope" value="Bacteria"/>
</dbReference>
<dbReference type="HOGENOM" id="CLU_043846_3_1_6"/>
<dbReference type="UniPathway" id="UPA00068">
    <property type="reaction ID" value="UER00112"/>
</dbReference>
<dbReference type="Proteomes" id="UP000000584">
    <property type="component" value="Chromosome 1"/>
</dbReference>
<dbReference type="GO" id="GO:0005737">
    <property type="term" value="C:cytoplasm"/>
    <property type="evidence" value="ECO:0007669"/>
    <property type="project" value="UniProtKB-SubCell"/>
</dbReference>
<dbReference type="GO" id="GO:0016597">
    <property type="term" value="F:amino acid binding"/>
    <property type="evidence" value="ECO:0007669"/>
    <property type="project" value="InterPro"/>
</dbReference>
<dbReference type="GO" id="GO:0004585">
    <property type="term" value="F:ornithine carbamoyltransferase activity"/>
    <property type="evidence" value="ECO:0000318"/>
    <property type="project" value="GO_Central"/>
</dbReference>
<dbReference type="GO" id="GO:0042450">
    <property type="term" value="P:arginine biosynthetic process via ornithine"/>
    <property type="evidence" value="ECO:0000318"/>
    <property type="project" value="GO_Central"/>
</dbReference>
<dbReference type="GO" id="GO:0019240">
    <property type="term" value="P:citrulline biosynthetic process"/>
    <property type="evidence" value="ECO:0000318"/>
    <property type="project" value="GO_Central"/>
</dbReference>
<dbReference type="GO" id="GO:0006526">
    <property type="term" value="P:L-arginine biosynthetic process"/>
    <property type="evidence" value="ECO:0007669"/>
    <property type="project" value="UniProtKB-UniRule"/>
</dbReference>
<dbReference type="FunFam" id="3.40.50.1370:FF:000004">
    <property type="entry name" value="Ornithine carbamoyltransferase"/>
    <property type="match status" value="1"/>
</dbReference>
<dbReference type="Gene3D" id="3.40.50.1370">
    <property type="entry name" value="Aspartate/ornithine carbamoyltransferase"/>
    <property type="match status" value="2"/>
</dbReference>
<dbReference type="HAMAP" id="MF_01109">
    <property type="entry name" value="OTCase"/>
    <property type="match status" value="1"/>
</dbReference>
<dbReference type="InterPro" id="IPR006132">
    <property type="entry name" value="Asp/Orn_carbamoyltranf_P-bd"/>
</dbReference>
<dbReference type="InterPro" id="IPR006130">
    <property type="entry name" value="Asp/Orn_carbamoylTrfase"/>
</dbReference>
<dbReference type="InterPro" id="IPR036901">
    <property type="entry name" value="Asp/Orn_carbamoylTrfase_sf"/>
</dbReference>
<dbReference type="InterPro" id="IPR006131">
    <property type="entry name" value="Asp_carbamoyltransf_Asp/Orn-bd"/>
</dbReference>
<dbReference type="InterPro" id="IPR002292">
    <property type="entry name" value="Orn/put_carbamltrans"/>
</dbReference>
<dbReference type="InterPro" id="IPR024904">
    <property type="entry name" value="OTCase_ArgI"/>
</dbReference>
<dbReference type="NCBIfam" id="TIGR00658">
    <property type="entry name" value="orni_carb_tr"/>
    <property type="match status" value="1"/>
</dbReference>
<dbReference type="NCBIfam" id="NF001986">
    <property type="entry name" value="PRK00779.1"/>
    <property type="match status" value="1"/>
</dbReference>
<dbReference type="NCBIfam" id="NF003286">
    <property type="entry name" value="PRK04284.1"/>
    <property type="match status" value="1"/>
</dbReference>
<dbReference type="PANTHER" id="PTHR45753:SF2">
    <property type="entry name" value="ORNITHINE CARBAMOYLTRANSFERASE"/>
    <property type="match status" value="1"/>
</dbReference>
<dbReference type="PANTHER" id="PTHR45753">
    <property type="entry name" value="ORNITHINE CARBAMOYLTRANSFERASE, MITOCHONDRIAL"/>
    <property type="match status" value="1"/>
</dbReference>
<dbReference type="Pfam" id="PF00185">
    <property type="entry name" value="OTCace"/>
    <property type="match status" value="1"/>
</dbReference>
<dbReference type="Pfam" id="PF02729">
    <property type="entry name" value="OTCace_N"/>
    <property type="match status" value="1"/>
</dbReference>
<dbReference type="PRINTS" id="PR00100">
    <property type="entry name" value="AOTCASE"/>
</dbReference>
<dbReference type="PRINTS" id="PR00102">
    <property type="entry name" value="OTCASE"/>
</dbReference>
<dbReference type="SUPFAM" id="SSF53671">
    <property type="entry name" value="Aspartate/ornithine carbamoyltransferase"/>
    <property type="match status" value="1"/>
</dbReference>
<dbReference type="PROSITE" id="PS00097">
    <property type="entry name" value="CARBAMOYLTRANSFERASE"/>
    <property type="match status" value="1"/>
</dbReference>
<protein>
    <recommendedName>
        <fullName evidence="2">Ornithine carbamoyltransferase</fullName>
        <shortName evidence="2">OTCase</shortName>
        <ecNumber evidence="2">2.1.3.3</ecNumber>
    </recommendedName>
</protein>
<feature type="chain" id="PRO_0000113053" description="Ornithine carbamoyltransferase">
    <location>
        <begin position="1"/>
        <end position="334"/>
    </location>
</feature>
<feature type="binding site" evidence="2">
    <location>
        <begin position="57"/>
        <end position="60"/>
    </location>
    <ligand>
        <name>carbamoyl phosphate</name>
        <dbReference type="ChEBI" id="CHEBI:58228"/>
    </ligand>
</feature>
<feature type="binding site" evidence="2">
    <location>
        <position position="84"/>
    </location>
    <ligand>
        <name>carbamoyl phosphate</name>
        <dbReference type="ChEBI" id="CHEBI:58228"/>
    </ligand>
</feature>
<feature type="binding site" evidence="2">
    <location>
        <position position="108"/>
    </location>
    <ligand>
        <name>carbamoyl phosphate</name>
        <dbReference type="ChEBI" id="CHEBI:58228"/>
    </ligand>
</feature>
<feature type="binding site" evidence="2">
    <location>
        <begin position="135"/>
        <end position="138"/>
    </location>
    <ligand>
        <name>carbamoyl phosphate</name>
        <dbReference type="ChEBI" id="CHEBI:58228"/>
    </ligand>
</feature>
<feature type="binding site" evidence="2">
    <location>
        <position position="169"/>
    </location>
    <ligand>
        <name>L-ornithine</name>
        <dbReference type="ChEBI" id="CHEBI:46911"/>
    </ligand>
</feature>
<feature type="binding site" evidence="2">
    <location>
        <position position="233"/>
    </location>
    <ligand>
        <name>L-ornithine</name>
        <dbReference type="ChEBI" id="CHEBI:46911"/>
    </ligand>
</feature>
<feature type="binding site" evidence="2">
    <location>
        <begin position="237"/>
        <end position="238"/>
    </location>
    <ligand>
        <name>L-ornithine</name>
        <dbReference type="ChEBI" id="CHEBI:46911"/>
    </ligand>
</feature>
<feature type="binding site" evidence="2">
    <location>
        <begin position="275"/>
        <end position="276"/>
    </location>
    <ligand>
        <name>carbamoyl phosphate</name>
        <dbReference type="ChEBI" id="CHEBI:58228"/>
    </ligand>
</feature>
<feature type="binding site" evidence="2">
    <location>
        <position position="320"/>
    </location>
    <ligand>
        <name>carbamoyl phosphate</name>
        <dbReference type="ChEBI" id="CHEBI:58228"/>
    </ligand>
</feature>